<dbReference type="EMBL" id="AK122217">
    <property type="protein sequence ID" value="BAC65499.1"/>
    <property type="status" value="ALT_INIT"/>
    <property type="molecule type" value="mRNA"/>
</dbReference>
<dbReference type="EMBL" id="AL645852">
    <property type="status" value="NOT_ANNOTATED_CDS"/>
    <property type="molecule type" value="Genomic_DNA"/>
</dbReference>
<dbReference type="EMBL" id="BC007157">
    <property type="protein sequence ID" value="AAH07157.1"/>
    <property type="molecule type" value="mRNA"/>
</dbReference>
<dbReference type="EMBL" id="BC030865">
    <property type="protein sequence ID" value="AAH30865.1"/>
    <property type="molecule type" value="mRNA"/>
</dbReference>
<dbReference type="EMBL" id="BC053088">
    <property type="protein sequence ID" value="AAH53088.1"/>
    <property type="molecule type" value="mRNA"/>
</dbReference>
<dbReference type="EMBL" id="AK047622">
    <property type="protein sequence ID" value="BAC33103.1"/>
    <property type="molecule type" value="mRNA"/>
</dbReference>
<dbReference type="CCDS" id="CCDS25646.1"/>
<dbReference type="RefSeq" id="NP_082290.2">
    <property type="nucleotide sequence ID" value="NM_028014.3"/>
</dbReference>
<dbReference type="RefSeq" id="XP_006534334.1">
    <property type="nucleotide sequence ID" value="XM_006534271.2"/>
</dbReference>
<dbReference type="RefSeq" id="XP_030102196.1">
    <property type="nucleotide sequence ID" value="XM_030246336.2"/>
</dbReference>
<dbReference type="RefSeq" id="XP_030102197.1">
    <property type="nucleotide sequence ID" value="XM_030246337.1"/>
</dbReference>
<dbReference type="RefSeq" id="XP_036012890.1">
    <property type="nucleotide sequence ID" value="XM_036156997.1"/>
</dbReference>
<dbReference type="RefSeq" id="XP_036012891.1">
    <property type="nucleotide sequence ID" value="XM_036156998.1"/>
</dbReference>
<dbReference type="BioGRID" id="215048">
    <property type="interactions" value="3"/>
</dbReference>
<dbReference type="FunCoup" id="Q7TSH8">
    <property type="interactions" value="1544"/>
</dbReference>
<dbReference type="IntAct" id="Q7TSH8">
    <property type="interactions" value="2"/>
</dbReference>
<dbReference type="MINT" id="Q7TSH8"/>
<dbReference type="STRING" id="10090.ENSMUSP00000091440"/>
<dbReference type="GlyCosmos" id="Q7TSH8">
    <property type="glycosylation" value="6 sites, No reported glycans"/>
</dbReference>
<dbReference type="GlyGen" id="Q7TSH8">
    <property type="glycosylation" value="2 sites, 1 N-linked glycan (1 site)"/>
</dbReference>
<dbReference type="iPTMnet" id="Q7TSH8"/>
<dbReference type="PhosphoSitePlus" id="Q7TSH8"/>
<dbReference type="jPOST" id="Q7TSH8"/>
<dbReference type="PaxDb" id="10090-ENSMUSP00000091440"/>
<dbReference type="ProteomicsDB" id="259593"/>
<dbReference type="Antibodypedia" id="19552">
    <property type="antibodies" value="24 antibodies from 15 providers"/>
</dbReference>
<dbReference type="DNASU" id="71947"/>
<dbReference type="Ensembl" id="ENSMUST00000093912.11">
    <property type="protein sequence ID" value="ENSMUSP00000091440.5"/>
    <property type="gene ID" value="ENSMUSG00000020747.19"/>
</dbReference>
<dbReference type="Ensembl" id="ENSMUST00000103033.8">
    <property type="protein sequence ID" value="ENSMUSP00000099322.2"/>
    <property type="gene ID" value="ENSMUSG00000020747.19"/>
</dbReference>
<dbReference type="GeneID" id="71947"/>
<dbReference type="KEGG" id="mmu:71947"/>
<dbReference type="UCSC" id="uc007mil.1">
    <property type="organism name" value="mouse"/>
</dbReference>
<dbReference type="AGR" id="MGI:1919197"/>
<dbReference type="CTD" id="9772"/>
<dbReference type="MGI" id="MGI:1919197">
    <property type="gene designation" value="Tmem94"/>
</dbReference>
<dbReference type="VEuPathDB" id="HostDB:ENSMUSG00000020747"/>
<dbReference type="eggNOG" id="KOG4383">
    <property type="taxonomic scope" value="Eukaryota"/>
</dbReference>
<dbReference type="GeneTree" id="ENSGT00390000016550"/>
<dbReference type="HOGENOM" id="CLU_005325_0_0_1"/>
<dbReference type="InParanoid" id="Q7TSH8"/>
<dbReference type="OMA" id="GCAMQTP"/>
<dbReference type="OrthoDB" id="5568754at2759"/>
<dbReference type="PhylomeDB" id="Q7TSH8"/>
<dbReference type="TreeFam" id="TF314852"/>
<dbReference type="BioGRID-ORCS" id="71947">
    <property type="hits" value="3 hits in 47 CRISPR screens"/>
</dbReference>
<dbReference type="ChiTaRS" id="Tmem94">
    <property type="organism name" value="mouse"/>
</dbReference>
<dbReference type="PRO" id="PR:Q7TSH8"/>
<dbReference type="Proteomes" id="UP000000589">
    <property type="component" value="Chromosome 11"/>
</dbReference>
<dbReference type="RNAct" id="Q7TSH8">
    <property type="molecule type" value="protein"/>
</dbReference>
<dbReference type="Bgee" id="ENSMUSG00000020747">
    <property type="expression patterns" value="Expressed in embryonic brain and 202 other cell types or tissues"/>
</dbReference>
<dbReference type="ExpressionAtlas" id="Q7TSH8">
    <property type="expression patterns" value="baseline and differential"/>
</dbReference>
<dbReference type="GO" id="GO:0005789">
    <property type="term" value="C:endoplasmic reticulum membrane"/>
    <property type="evidence" value="ECO:0000314"/>
    <property type="project" value="UniProtKB"/>
</dbReference>
<dbReference type="GO" id="GO:0015444">
    <property type="term" value="F:P-type magnesium transporter activity"/>
    <property type="evidence" value="ECO:0000314"/>
    <property type="project" value="UniProtKB"/>
</dbReference>
<dbReference type="GO" id="GO:1990403">
    <property type="term" value="P:embryonic brain development"/>
    <property type="evidence" value="ECO:0000315"/>
    <property type="project" value="MGI"/>
</dbReference>
<dbReference type="GO" id="GO:0035050">
    <property type="term" value="P:embryonic heart tube development"/>
    <property type="evidence" value="ECO:0000315"/>
    <property type="project" value="MGI"/>
</dbReference>
<dbReference type="GO" id="GO:0010961">
    <property type="term" value="P:intracellular magnesium ion homeostasis"/>
    <property type="evidence" value="ECO:0000315"/>
    <property type="project" value="UniProtKB"/>
</dbReference>
<dbReference type="GO" id="GO:0160176">
    <property type="term" value="P:magnesium ion transport from cytosol to endoplasmic reticulum"/>
    <property type="evidence" value="ECO:0000315"/>
    <property type="project" value="UniProtKB"/>
</dbReference>
<dbReference type="Gene3D" id="1.20.1110.10">
    <property type="entry name" value="Calcium-transporting ATPase, transmembrane domain"/>
    <property type="match status" value="1"/>
</dbReference>
<dbReference type="InterPro" id="IPR023298">
    <property type="entry name" value="ATPase_P-typ_TM_dom_sf"/>
</dbReference>
<dbReference type="InterPro" id="IPR039720">
    <property type="entry name" value="TMEM94"/>
</dbReference>
<dbReference type="PANTHER" id="PTHR13219">
    <property type="entry name" value="TRANSMEMBRANE PROTEIN 94"/>
    <property type="match status" value="1"/>
</dbReference>
<dbReference type="PANTHER" id="PTHR13219:SF6">
    <property type="entry name" value="TRANSMEMBRANE PROTEIN 94"/>
    <property type="match status" value="1"/>
</dbReference>
<dbReference type="SUPFAM" id="SSF81665">
    <property type="entry name" value="Calcium ATPase, transmembrane domain M"/>
    <property type="match status" value="1"/>
</dbReference>
<name>TMM94_MOUSE</name>
<comment type="function">
    <text evidence="5">Could function in the uptake of Mg(2+) from the cytosol into the endoplasmic reticulum and regulate intracellular Mg(2+) homeostasis.</text>
</comment>
<comment type="subunit">
    <text evidence="1">Forms homooligomers.</text>
</comment>
<comment type="subcellular location">
    <subcellularLocation>
        <location evidence="5">Endoplasmic reticulum membrane</location>
        <topology evidence="9">Multi-pass membrane protein</topology>
    </subcellularLocation>
</comment>
<comment type="disruption phenotype">
    <text evidence="4">The knockout of the Tmem94 gene is embryonic lethal. Embryos exhibit craniofacial defects, cardiac abnormalities, and abnormal neuronal migration in the central nervous system.</text>
</comment>
<comment type="caution">
    <text evidence="7">Has been suggested to function as an endoplasmic reticulum magnesium-transporting P-type ATPase, but this is debated.</text>
</comment>
<comment type="sequence caution" evidence="8">
    <conflict type="erroneous initiation">
        <sequence resource="EMBL-CDS" id="BAC65499"/>
    </conflict>
    <text>Extended N-terminus.</text>
</comment>
<keyword id="KW-0256">Endoplasmic reticulum</keyword>
<keyword id="KW-0325">Glycoprotein</keyword>
<keyword id="KW-0406">Ion transport</keyword>
<keyword id="KW-0472">Membrane</keyword>
<keyword id="KW-0597">Phosphoprotein</keyword>
<keyword id="KW-1185">Reference proteome</keyword>
<keyword id="KW-0812">Transmembrane</keyword>
<keyword id="KW-1133">Transmembrane helix</keyword>
<keyword id="KW-0813">Transport</keyword>
<reference key="1">
    <citation type="journal article" date="2003" name="DNA Res.">
        <title>Prediction of the coding sequences of mouse homologues of KIAA gene: II. The complete nucleotide sequences of 400 mouse KIAA-homologous cDNAs identified by screening of terminal sequences of cDNA clones randomly sampled from size-fractionated libraries.</title>
        <authorList>
            <person name="Okazaki N."/>
            <person name="Kikuno R."/>
            <person name="Ohara R."/>
            <person name="Inamoto S."/>
            <person name="Aizawa H."/>
            <person name="Yuasa S."/>
            <person name="Nakajima D."/>
            <person name="Nagase T."/>
            <person name="Ohara O."/>
            <person name="Koga H."/>
        </authorList>
    </citation>
    <scope>NUCLEOTIDE SEQUENCE [LARGE SCALE MRNA]</scope>
    <source>
        <tissue>Brain</tissue>
    </source>
</reference>
<reference key="2">
    <citation type="journal article" date="2009" name="PLoS Biol.">
        <title>Lineage-specific biology revealed by a finished genome assembly of the mouse.</title>
        <authorList>
            <person name="Church D.M."/>
            <person name="Goodstadt L."/>
            <person name="Hillier L.W."/>
            <person name="Zody M.C."/>
            <person name="Goldstein S."/>
            <person name="She X."/>
            <person name="Bult C.J."/>
            <person name="Agarwala R."/>
            <person name="Cherry J.L."/>
            <person name="DiCuccio M."/>
            <person name="Hlavina W."/>
            <person name="Kapustin Y."/>
            <person name="Meric P."/>
            <person name="Maglott D."/>
            <person name="Birtle Z."/>
            <person name="Marques A.C."/>
            <person name="Graves T."/>
            <person name="Zhou S."/>
            <person name="Teague B."/>
            <person name="Potamousis K."/>
            <person name="Churas C."/>
            <person name="Place M."/>
            <person name="Herschleb J."/>
            <person name="Runnheim R."/>
            <person name="Forrest D."/>
            <person name="Amos-Landgraf J."/>
            <person name="Schwartz D.C."/>
            <person name="Cheng Z."/>
            <person name="Lindblad-Toh K."/>
            <person name="Eichler E.E."/>
            <person name="Ponting C.P."/>
        </authorList>
    </citation>
    <scope>NUCLEOTIDE SEQUENCE [LARGE SCALE GENOMIC DNA]</scope>
    <source>
        <strain>C57BL/6J</strain>
    </source>
</reference>
<reference key="3">
    <citation type="journal article" date="2004" name="Genome Res.">
        <title>The status, quality, and expansion of the NIH full-length cDNA project: the Mammalian Gene Collection (MGC).</title>
        <authorList>
            <consortium name="The MGC Project Team"/>
        </authorList>
    </citation>
    <scope>NUCLEOTIDE SEQUENCE [LARGE SCALE MRNA]</scope>
    <source>
        <strain>C57BL/6J</strain>
        <tissue>Brain</tissue>
        <tissue>Colon</tissue>
        <tissue>Mammary tumor</tissue>
    </source>
</reference>
<reference key="4">
    <citation type="journal article" date="2005" name="Science">
        <title>The transcriptional landscape of the mammalian genome.</title>
        <authorList>
            <person name="Carninci P."/>
            <person name="Kasukawa T."/>
            <person name="Katayama S."/>
            <person name="Gough J."/>
            <person name="Frith M.C."/>
            <person name="Maeda N."/>
            <person name="Oyama R."/>
            <person name="Ravasi T."/>
            <person name="Lenhard B."/>
            <person name="Wells C."/>
            <person name="Kodzius R."/>
            <person name="Shimokawa K."/>
            <person name="Bajic V.B."/>
            <person name="Brenner S.E."/>
            <person name="Batalov S."/>
            <person name="Forrest A.R."/>
            <person name="Zavolan M."/>
            <person name="Davis M.J."/>
            <person name="Wilming L.G."/>
            <person name="Aidinis V."/>
            <person name="Allen J.E."/>
            <person name="Ambesi-Impiombato A."/>
            <person name="Apweiler R."/>
            <person name="Aturaliya R.N."/>
            <person name="Bailey T.L."/>
            <person name="Bansal M."/>
            <person name="Baxter L."/>
            <person name="Beisel K.W."/>
            <person name="Bersano T."/>
            <person name="Bono H."/>
            <person name="Chalk A.M."/>
            <person name="Chiu K.P."/>
            <person name="Choudhary V."/>
            <person name="Christoffels A."/>
            <person name="Clutterbuck D.R."/>
            <person name="Crowe M.L."/>
            <person name="Dalla E."/>
            <person name="Dalrymple B.P."/>
            <person name="de Bono B."/>
            <person name="Della Gatta G."/>
            <person name="di Bernardo D."/>
            <person name="Down T."/>
            <person name="Engstrom P."/>
            <person name="Fagiolini M."/>
            <person name="Faulkner G."/>
            <person name="Fletcher C.F."/>
            <person name="Fukushima T."/>
            <person name="Furuno M."/>
            <person name="Futaki S."/>
            <person name="Gariboldi M."/>
            <person name="Georgii-Hemming P."/>
            <person name="Gingeras T.R."/>
            <person name="Gojobori T."/>
            <person name="Green R.E."/>
            <person name="Gustincich S."/>
            <person name="Harbers M."/>
            <person name="Hayashi Y."/>
            <person name="Hensch T.K."/>
            <person name="Hirokawa N."/>
            <person name="Hill D."/>
            <person name="Huminiecki L."/>
            <person name="Iacono M."/>
            <person name="Ikeo K."/>
            <person name="Iwama A."/>
            <person name="Ishikawa T."/>
            <person name="Jakt M."/>
            <person name="Kanapin A."/>
            <person name="Katoh M."/>
            <person name="Kawasawa Y."/>
            <person name="Kelso J."/>
            <person name="Kitamura H."/>
            <person name="Kitano H."/>
            <person name="Kollias G."/>
            <person name="Krishnan S.P."/>
            <person name="Kruger A."/>
            <person name="Kummerfeld S.K."/>
            <person name="Kurochkin I.V."/>
            <person name="Lareau L.F."/>
            <person name="Lazarevic D."/>
            <person name="Lipovich L."/>
            <person name="Liu J."/>
            <person name="Liuni S."/>
            <person name="McWilliam S."/>
            <person name="Madan Babu M."/>
            <person name="Madera M."/>
            <person name="Marchionni L."/>
            <person name="Matsuda H."/>
            <person name="Matsuzawa S."/>
            <person name="Miki H."/>
            <person name="Mignone F."/>
            <person name="Miyake S."/>
            <person name="Morris K."/>
            <person name="Mottagui-Tabar S."/>
            <person name="Mulder N."/>
            <person name="Nakano N."/>
            <person name="Nakauchi H."/>
            <person name="Ng P."/>
            <person name="Nilsson R."/>
            <person name="Nishiguchi S."/>
            <person name="Nishikawa S."/>
            <person name="Nori F."/>
            <person name="Ohara O."/>
            <person name="Okazaki Y."/>
            <person name="Orlando V."/>
            <person name="Pang K.C."/>
            <person name="Pavan W.J."/>
            <person name="Pavesi G."/>
            <person name="Pesole G."/>
            <person name="Petrovsky N."/>
            <person name="Piazza S."/>
            <person name="Reed J."/>
            <person name="Reid J.F."/>
            <person name="Ring B.Z."/>
            <person name="Ringwald M."/>
            <person name="Rost B."/>
            <person name="Ruan Y."/>
            <person name="Salzberg S.L."/>
            <person name="Sandelin A."/>
            <person name="Schneider C."/>
            <person name="Schoenbach C."/>
            <person name="Sekiguchi K."/>
            <person name="Semple C.A."/>
            <person name="Seno S."/>
            <person name="Sessa L."/>
            <person name="Sheng Y."/>
            <person name="Shibata Y."/>
            <person name="Shimada H."/>
            <person name="Shimada K."/>
            <person name="Silva D."/>
            <person name="Sinclair B."/>
            <person name="Sperling S."/>
            <person name="Stupka E."/>
            <person name="Sugiura K."/>
            <person name="Sultana R."/>
            <person name="Takenaka Y."/>
            <person name="Taki K."/>
            <person name="Tammoja K."/>
            <person name="Tan S.L."/>
            <person name="Tang S."/>
            <person name="Taylor M.S."/>
            <person name="Tegner J."/>
            <person name="Teichmann S.A."/>
            <person name="Ueda H.R."/>
            <person name="van Nimwegen E."/>
            <person name="Verardo R."/>
            <person name="Wei C.L."/>
            <person name="Yagi K."/>
            <person name="Yamanishi H."/>
            <person name="Zabarovsky E."/>
            <person name="Zhu S."/>
            <person name="Zimmer A."/>
            <person name="Hide W."/>
            <person name="Bult C."/>
            <person name="Grimmond S.M."/>
            <person name="Teasdale R.D."/>
            <person name="Liu E.T."/>
            <person name="Brusic V."/>
            <person name="Quackenbush J."/>
            <person name="Wahlestedt C."/>
            <person name="Mattick J.S."/>
            <person name="Hume D.A."/>
            <person name="Kai C."/>
            <person name="Sasaki D."/>
            <person name="Tomaru Y."/>
            <person name="Fukuda S."/>
            <person name="Kanamori-Katayama M."/>
            <person name="Suzuki M."/>
            <person name="Aoki J."/>
            <person name="Arakawa T."/>
            <person name="Iida J."/>
            <person name="Imamura K."/>
            <person name="Itoh M."/>
            <person name="Kato T."/>
            <person name="Kawaji H."/>
            <person name="Kawagashira N."/>
            <person name="Kawashima T."/>
            <person name="Kojima M."/>
            <person name="Kondo S."/>
            <person name="Konno H."/>
            <person name="Nakano K."/>
            <person name="Ninomiya N."/>
            <person name="Nishio T."/>
            <person name="Okada M."/>
            <person name="Plessy C."/>
            <person name="Shibata K."/>
            <person name="Shiraki T."/>
            <person name="Suzuki S."/>
            <person name="Tagami M."/>
            <person name="Waki K."/>
            <person name="Watahiki A."/>
            <person name="Okamura-Oho Y."/>
            <person name="Suzuki H."/>
            <person name="Kawai J."/>
            <person name="Hayashizaki Y."/>
        </authorList>
    </citation>
    <scope>NUCLEOTIDE SEQUENCE [LARGE SCALE MRNA] OF 548-1360</scope>
    <source>
        <strain>C57BL/6J</strain>
        <tissue>Corpus striatum</tissue>
    </source>
</reference>
<reference key="5">
    <citation type="journal article" date="2010" name="Cell">
        <title>A tissue-specific atlas of mouse protein phosphorylation and expression.</title>
        <authorList>
            <person name="Huttlin E.L."/>
            <person name="Jedrychowski M.P."/>
            <person name="Elias J.E."/>
            <person name="Goswami T."/>
            <person name="Rad R."/>
            <person name="Beausoleil S.A."/>
            <person name="Villen J."/>
            <person name="Haas W."/>
            <person name="Sowa M.E."/>
            <person name="Gygi S.P."/>
        </authorList>
    </citation>
    <scope>PHOSPHORYLATION [LARGE SCALE ANALYSIS] AT SER-221 AND SER-225</scope>
    <scope>IDENTIFICATION BY MASS SPECTROMETRY [LARGE SCALE ANALYSIS]</scope>
    <source>
        <tissue>Brain</tissue>
        <tissue>Brown adipose tissue</tissue>
        <tissue>Spleen</tissue>
        <tissue>Testis</tissue>
    </source>
</reference>
<reference key="6">
    <citation type="journal article" date="2018" name="Am. J. Hum. Genet.">
        <title>Bi-allelic TMEM94 Truncating Variants Are Associated with Neurodevelopmental Delay, Congenital Heart Defects, and Distinct Facial Dysmorphism.</title>
        <authorList>
            <consortium name="Undiagnosed Diseases Network members"/>
            <person name="Stephen J."/>
            <person name="Maddirevula S."/>
            <person name="Nampoothiri S."/>
            <person name="Burke J.D."/>
            <person name="Herzog M."/>
            <person name="Shukla A."/>
            <person name="Steindl K."/>
            <person name="Eskin A."/>
            <person name="Patil S.J."/>
            <person name="Joset P."/>
            <person name="Lee H."/>
            <person name="Garrett L.J."/>
            <person name="Yokoyama T."/>
            <person name="Balanda N."/>
            <person name="Bodine S.P."/>
            <person name="Tolman N.J."/>
            <person name="Zerfas P.M."/>
            <person name="Zheng A."/>
            <person name="Ramantani G."/>
            <person name="Girisha K.M."/>
            <person name="Rivas C."/>
            <person name="Suresh P.V."/>
            <person name="Elkahloun A."/>
            <person name="Alsaif H.S."/>
            <person name="Wakil S.M."/>
            <person name="Mahmoud L."/>
            <person name="Ali R."/>
            <person name="Prochazkova M."/>
            <person name="Kulkarni A.B."/>
            <person name="Ben-Omran T."/>
            <person name="Colak D."/>
            <person name="Morris H.D."/>
            <person name="Rauch A."/>
            <person name="Martinez-Agosto J.A."/>
            <person name="Nelson S.F."/>
            <person name="Alkuraya F.S."/>
            <person name="Gahl W.A."/>
            <person name="Malicdan M.C.V."/>
        </authorList>
    </citation>
    <scope>DISRUPTION PHENOTYPE</scope>
</reference>
<reference key="7">
    <citation type="journal article" date="2024" name="Mol. Cell">
        <title>ERMA (TMEM94) is a P-type ATPase transporter for Mg2+ uptake in the endoplasmic reticulum.</title>
        <authorList>
            <person name="Vishnu N."/>
            <person name="Venkatesan M."/>
            <person name="Madaris T.R."/>
            <person name="Venkateswaran M.K."/>
            <person name="Stanley K."/>
            <person name="Ramachandran K."/>
            <person name="Chidambaram A."/>
            <person name="Madesh A.K."/>
            <person name="Yang W."/>
            <person name="Nair J."/>
            <person name="Narkunan M."/>
            <person name="Muthukumar T."/>
            <person name="Karanam V."/>
            <person name="Joseph L.C."/>
            <person name="Le A."/>
            <person name="Osidele A."/>
            <person name="Aslam M.I."/>
            <person name="Morrow J.P."/>
            <person name="Malicdan M.C."/>
            <person name="Stathopulos P.B."/>
            <person name="Madesh M."/>
        </authorList>
    </citation>
    <scope>FUNCTION</scope>
    <scope>SUBCELLULAR LOCATION</scope>
    <scope>TOPOLOGY</scope>
    <scope>MOTIF</scope>
</reference>
<reference key="8">
    <citation type="journal article" date="2024" name="Cell Calcium">
        <title>TMEM94 cannot be called a P-type ATPase.</title>
        <authorList>
            <person name="Palmgren M."/>
            <person name="Morth J.P."/>
            <person name="Nissen P."/>
        </authorList>
    </citation>
    <scope>CAUTION</scope>
</reference>
<proteinExistence type="evidence at protein level"/>
<feature type="chain" id="PRO_0000050732" description="Transmembrane protein 94">
    <location>
        <begin position="1"/>
        <end position="1360"/>
    </location>
</feature>
<feature type="topological domain" description="Cytoplasmic" evidence="5">
    <location>
        <begin position="1"/>
        <end position="64"/>
    </location>
</feature>
<feature type="transmembrane region" description="Helical" evidence="2">
    <location>
        <begin position="65"/>
        <end position="85"/>
    </location>
</feature>
<feature type="topological domain" description="Lumenal" evidence="9">
    <location>
        <begin position="86"/>
        <end position="92"/>
    </location>
</feature>
<feature type="transmembrane region" description="Helical" evidence="2">
    <location>
        <begin position="93"/>
        <end position="113"/>
    </location>
</feature>
<feature type="topological domain" description="Cytoplasmic" evidence="9">
    <location>
        <begin position="114"/>
        <end position="273"/>
    </location>
</feature>
<feature type="transmembrane region" description="Helical" evidence="2">
    <location>
        <begin position="274"/>
        <end position="294"/>
    </location>
</feature>
<feature type="topological domain" description="Lumenal" evidence="9">
    <location>
        <begin position="295"/>
        <end position="320"/>
    </location>
</feature>
<feature type="transmembrane region" description="Helical" evidence="2">
    <location>
        <begin position="321"/>
        <end position="341"/>
    </location>
</feature>
<feature type="topological domain" description="Cytoplasmic" evidence="9">
    <location>
        <begin position="342"/>
        <end position="1096"/>
    </location>
</feature>
<feature type="transmembrane region" description="Helical" evidence="2">
    <location>
        <begin position="1097"/>
        <end position="1117"/>
    </location>
</feature>
<feature type="topological domain" description="Lumenal" evidence="9">
    <location>
        <begin position="1118"/>
        <end position="1124"/>
    </location>
</feature>
<feature type="transmembrane region" description="Helical" evidence="2">
    <location>
        <begin position="1125"/>
        <end position="1145"/>
    </location>
</feature>
<feature type="topological domain" description="Cytoplasmic" evidence="9">
    <location>
        <begin position="1146"/>
        <end position="1171"/>
    </location>
</feature>
<feature type="transmembrane region" description="Helical" evidence="2">
    <location>
        <begin position="1172"/>
        <end position="1192"/>
    </location>
</feature>
<feature type="topological domain" description="Lumenal" evidence="9">
    <location>
        <begin position="1193"/>
        <end position="1232"/>
    </location>
</feature>
<feature type="transmembrane region" description="Helical" evidence="2">
    <location>
        <begin position="1233"/>
        <end position="1253"/>
    </location>
</feature>
<feature type="topological domain" description="Cytoplasmic" evidence="9">
    <location>
        <begin position="1254"/>
        <end position="1269"/>
    </location>
</feature>
<feature type="transmembrane region" description="Helical" evidence="2">
    <location>
        <begin position="1270"/>
        <end position="1290"/>
    </location>
</feature>
<feature type="topological domain" description="Lumenal" evidence="9">
    <location>
        <begin position="1291"/>
        <end position="1310"/>
    </location>
</feature>
<feature type="transmembrane region" description="Helical" evidence="2">
    <location>
        <begin position="1311"/>
        <end position="1331"/>
    </location>
</feature>
<feature type="topological domain" description="Cytoplasmic" evidence="5">
    <location>
        <begin position="1332"/>
        <end position="1360"/>
    </location>
</feature>
<feature type="region of interest" description="Disordered" evidence="3">
    <location>
        <begin position="487"/>
        <end position="545"/>
    </location>
</feature>
<feature type="short sequence motif" description="DKQGIL" evidence="6">
    <location>
        <begin position="417"/>
        <end position="422"/>
    </location>
</feature>
<feature type="short sequence motif" description="GMN; metal-binding motif" evidence="6">
    <location>
        <begin position="1355"/>
        <end position="1357"/>
    </location>
</feature>
<feature type="compositionally biased region" description="Basic residues" evidence="3">
    <location>
        <begin position="506"/>
        <end position="515"/>
    </location>
</feature>
<feature type="modified residue" description="Phosphoserine" evidence="12">
    <location>
        <position position="221"/>
    </location>
</feature>
<feature type="modified residue" description="Phosphoserine" evidence="12">
    <location>
        <position position="225"/>
    </location>
</feature>
<feature type="modified residue" description="Phosphoserine" evidence="1">
    <location>
        <position position="444"/>
    </location>
</feature>
<feature type="modified residue" description="Phosphoserine" evidence="1">
    <location>
        <position position="445"/>
    </location>
</feature>
<feature type="modified residue" description="Phosphoserine" evidence="1">
    <location>
        <position position="454"/>
    </location>
</feature>
<feature type="modified residue" description="Phosphoserine" evidence="1">
    <location>
        <position position="517"/>
    </location>
</feature>
<feature type="modified residue" description="Phosphoserine" evidence="1">
    <location>
        <position position="522"/>
    </location>
</feature>
<feature type="modified residue" description="Phosphoserine" evidence="1">
    <location>
        <position position="802"/>
    </location>
</feature>
<feature type="modified residue" description="Phosphoserine" evidence="1">
    <location>
        <position position="945"/>
    </location>
</feature>
<feature type="glycosylation site" description="N-linked (GlcNAc...) asparagine" evidence="2">
    <location>
        <position position="1206"/>
    </location>
</feature>
<feature type="glycosylation site" description="N-linked (GlcNAc...) asparagine" evidence="2">
    <location>
        <position position="1209"/>
    </location>
</feature>
<gene>
    <name evidence="11" type="primary">Tmem94</name>
    <name evidence="6" type="synonym">Erma</name>
    <name evidence="10" type="synonym">Kiaa0195</name>
</gene>
<sequence>MDLREKHLGEPPLALGLSTRKALSVLKEQLEAVLEKHLKERKKSLTWKEAWRSSFLHLSNRCSCFHWPGASLMLLAVLLLLCCCGGQPAGSQGVELVNASALFLLLLLNLVLIGRQDRLKRREVERRLRGIIDQIQDALRDGKEIKWPNSMYPDLHMPFAPSWSLHWAYRDGHLVNLPVSLLVEGDIIALRPGQESFASLRGIKDDEHIVLEPGDLFPPFSPPPSPRGEVKRGPQNPQQHRLFRVLETPVIDNIRWCLDTALSRPVTALDNERFTVQSVMLHYAVPVVLAGFLITNALRFMFKAPGVTSWQYTLLQLQVNGMLPILPLLFPVLWVLATACGEARVLAQMSKASPSSLLAKFSEDTLSSYTEAVSSQEMLRCIWGHFLRVIQGTSPTLSHSASLLHSLGSVTVLCCVDKQGILSWPNPSPETVLFFSGKVEPPHSSHEDLTDDLSTRSFCHPEVEEEPHEHDALLAGSLNNTLHLSNEQERSDWLADGPKPSEPYPHHKGHGRSKHPSGSNVSFSRDTEGGEEEPSKAQPGTEGDPYEAEDFVCDYHLEMLSLSQDQQNPSCIQFDDSNWQSHLTSLKPLGLNVLLNLCNASVTERLCRFSDHLCNIALQESHSAVLPVHVPWGLCELARLIGFTPGAKELFKQENHLALYRLPSAETLKETSLGRPSCVTKRRPPLSHMISLFIKDTATSTEQMLSHGSADVVVEACTDFWDGADIYPLSGSDRKKVLDFYQRACLSGYCSAFAYKPMNCTLSSQLNGKCIELVQVPGQNSIFTMCELPSTIPIKPNNRRSSWSSDEGIGEVLEKEDCMQALSGQIFMGMVSSQYQARLDIVRLIDGLVNACIRFVYFSLEDELRSKVFAEKMGLETGWNCHISLTPNGDMPGSEIPPSSPSHAGSLHDDLNQVSRDDAEGLLLLEEEGHSDLISFQPTDSDIPSFLEDCNRAKLPRGIHQVRPHLQNIDNVPLLVPLFTDCTPDTMCEMIKIMQEYGEVTCCLGSSANLRNSCLFLQSDVSIALDPLYPSRCSWETFGYATSTTMAQASDGLSPLQLSGQLNSLPCSLTFRQEESISIIRLIEQARHATYGIRKCFLFLLQCQLTLVVIQFLSCLVQLPPLLSTTDILWLSCFCYPLLSISLLGKPPHSSIMSMATGKNLQSIPKKTQHYFLLCFLLKFSLTISSCLVCFGFTLQSFCDSARARNLTNCSSVMLCSNDDRAPAWFEDFANGLLSAQKLTAALIVLHTVFISITHVHRTKPLWRKSPLTNLWWAVTVPVVLLGQVVQTVVDLQLWTHRDSRVHFGLEDVPLLTWLLGCLSLVLVVVTNEIVKLHEIRVRVRYQKRQKLQFETKLGMNSPF</sequence>
<accession>Q7TSH8</accession>
<accession>B1AT99</accession>
<accession>Q80U66</accession>
<accession>Q8BL05</accession>
<accession>Q8K0Q0</accession>
<accession>Q91VY1</accession>
<organism>
    <name type="scientific">Mus musculus</name>
    <name type="common">Mouse</name>
    <dbReference type="NCBI Taxonomy" id="10090"/>
    <lineage>
        <taxon>Eukaryota</taxon>
        <taxon>Metazoa</taxon>
        <taxon>Chordata</taxon>
        <taxon>Craniata</taxon>
        <taxon>Vertebrata</taxon>
        <taxon>Euteleostomi</taxon>
        <taxon>Mammalia</taxon>
        <taxon>Eutheria</taxon>
        <taxon>Euarchontoglires</taxon>
        <taxon>Glires</taxon>
        <taxon>Rodentia</taxon>
        <taxon>Myomorpha</taxon>
        <taxon>Muroidea</taxon>
        <taxon>Muridae</taxon>
        <taxon>Murinae</taxon>
        <taxon>Mus</taxon>
        <taxon>Mus</taxon>
    </lineage>
</organism>
<evidence type="ECO:0000250" key="1">
    <source>
        <dbReference type="UniProtKB" id="Q12767"/>
    </source>
</evidence>
<evidence type="ECO:0000255" key="2"/>
<evidence type="ECO:0000256" key="3">
    <source>
        <dbReference type="SAM" id="MobiDB-lite"/>
    </source>
</evidence>
<evidence type="ECO:0000269" key="4">
    <source>
    </source>
</evidence>
<evidence type="ECO:0000269" key="5">
    <source>
    </source>
</evidence>
<evidence type="ECO:0000303" key="6">
    <source>
    </source>
</evidence>
<evidence type="ECO:0000303" key="7">
    <source>
    </source>
</evidence>
<evidence type="ECO:0000305" key="8"/>
<evidence type="ECO:0000305" key="9">
    <source>
    </source>
</evidence>
<evidence type="ECO:0000312" key="10">
    <source>
        <dbReference type="EMBL" id="BAC65499.1"/>
    </source>
</evidence>
<evidence type="ECO:0000312" key="11">
    <source>
        <dbReference type="MGI" id="MGI:1919197"/>
    </source>
</evidence>
<evidence type="ECO:0007744" key="12">
    <source>
    </source>
</evidence>
<protein>
    <recommendedName>
        <fullName evidence="11">Transmembrane protein 94</fullName>
    </recommendedName>
    <alternativeName>
        <fullName evidence="6">Endoplasmic reticulum magnesium ATPase</fullName>
    </alternativeName>
</protein>